<name>METL8_MOUSE</name>
<sequence length="281" mass="31670">MNVIWRSCICRLRQGKVPHRCQSGVHPVAPLGSRILTDPAKVFEHNMWDHMQWSKEEEDAARKKVEENSATRVAPEEQVKFESDANKYWDIFYQTHKNKFFKNRNWLLREFPEILPVNQNTKEKVGESSWDQVGSSISRTQGTETHCQESFVSPEPGSRGRSAPDPDLEEYSKGPGKTEPFPGSNATFRILEVGCGAGNSVFPILNTLQNIPGSFLYCCDFASEAVELVKSHESYSEAQCSAFIHDVCDDGLAYPFPDGILDVVLLVFVLSSIHPDRALFI</sequence>
<proteinExistence type="evidence at protein level"/>
<feature type="transit peptide" description="Mitochondrion" evidence="3">
    <location>
        <begin position="1"/>
        <end position="22"/>
    </location>
</feature>
<feature type="chain" id="PRO_0000311292" description="tRNA N(3)-cytidine methyltransferase METTL8, mitochondrial" evidence="3">
    <location>
        <begin position="23"/>
        <end position="281"/>
    </location>
</feature>
<feature type="region of interest" description="Disordered" evidence="4">
    <location>
        <begin position="139"/>
        <end position="180"/>
    </location>
</feature>
<feature type="compositionally biased region" description="Polar residues" evidence="4">
    <location>
        <begin position="139"/>
        <end position="151"/>
    </location>
</feature>
<feature type="binding site" evidence="1">
    <location>
        <position position="89"/>
    </location>
    <ligand>
        <name>S-adenosyl-L-methionine</name>
        <dbReference type="ChEBI" id="CHEBI:59789"/>
    </ligand>
</feature>
<feature type="binding site" evidence="1">
    <location>
        <position position="93"/>
    </location>
    <ligand>
        <name>S-adenosyl-L-methionine</name>
        <dbReference type="ChEBI" id="CHEBI:59789"/>
    </ligand>
</feature>
<feature type="binding site" evidence="1">
    <location>
        <position position="194"/>
    </location>
    <ligand>
        <name>S-adenosyl-L-methionine</name>
        <dbReference type="ChEBI" id="CHEBI:59789"/>
    </ligand>
</feature>
<feature type="binding site" evidence="1">
    <location>
        <position position="220"/>
    </location>
    <ligand>
        <name>S-adenosyl-L-methionine</name>
        <dbReference type="ChEBI" id="CHEBI:59789"/>
    </ligand>
</feature>
<feature type="binding site" evidence="1">
    <location>
        <position position="246"/>
    </location>
    <ligand>
        <name>S-adenosyl-L-methionine</name>
        <dbReference type="ChEBI" id="CHEBI:59789"/>
    </ligand>
</feature>
<feature type="cross-link" description="Glycyl lysine isopeptide (Lys-Gly) (interchain with G-Cter in SUMO)" evidence="2">
    <location>
        <position position="80"/>
    </location>
</feature>
<feature type="splice variant" id="VSP_037111" description="In isoform 6." evidence="10">
    <location>
        <begin position="79"/>
        <end position="154"/>
    </location>
</feature>
<feature type="splice variant" id="VSP_029515" description="In isoform 5." evidence="9">
    <original>VGCGAGNSVFPILNTLQNIPGSFLYCCDFASEAVELVKSHESYSEAQCSAFIHDVCDDGLAYPFPDGILDVVLLVFVLSSIHPDRALFI</original>
    <variation>EHSRILSLLLRLCL</variation>
    <location>
        <begin position="193"/>
        <end position="281"/>
    </location>
</feature>
<feature type="splice variant" id="VSP_029516" description="In isoform 2." evidence="8 9">
    <original>ALFI</original>
    <variation>QVPPCLPNRTCDFYKMSQPPGRGYRPA</variation>
    <location>
        <begin position="278"/>
        <end position="281"/>
    </location>
</feature>
<feature type="splice variant" id="VSP_029517" description="In isoform 3 and isoform 6." evidence="8 10">
    <original>ALFI</original>
    <variation>MQAVAHRLSRLLKPGGMLLFRDHGRYDNAQLRFKKGRCLSENFYVRGDGTRAYFFTKGEIRRMFCEAGLHEKQNLVDHRLQVNRKKQVQMHRVWIQGKFQKPSPWTPQSGN</variation>
    <location>
        <begin position="278"/>
        <end position="281"/>
    </location>
</feature>
<feature type="splice variant" id="VSP_029518" description="In isoform 4." evidence="9">
    <original>ALFI</original>
    <variation>MQAVAHRLSRLLKPGGMLLFRDHGRYDNAQLRFKKGRCLSENFYVRGDGPELISLQKGKSAVCSARLDYTKSKIWLIIACK</variation>
    <location>
        <begin position="278"/>
        <end position="281"/>
    </location>
</feature>
<feature type="sequence conflict" description="In Ref. 2; ABB54392 and 4; AAH04636/AAH57960." evidence="12" ref="2 4">
    <original>I</original>
    <variation>T</variation>
    <location>
        <position position="91"/>
    </location>
</feature>
<feature type="sequence conflict" description="In Ref. 1; AAZ04166/AAZ04167, 2; ABB54392/ABB54393 and 4; AAH04636/AAH57960." evidence="12" ref="1 2 4">
    <original>R</original>
    <variation>W</variation>
    <location>
        <position position="161"/>
    </location>
</feature>
<feature type="sequence conflict" description="In Ref. 1; AAZ04167, 2; ABB54392/ABB54393 and 4; AAH04636/AAH57960." evidence="12" ref="1 2 4">
    <original>E</original>
    <variation>K</variation>
    <location>
        <position position="233"/>
    </location>
</feature>
<feature type="sequence conflict" description="In Ref. 1; AAZ04167, 2; ABB54392/ABB54393 and 4; AAH04636/AAH57960." evidence="12" ref="1 2 4">
    <original>A</original>
    <variation>T</variation>
    <location>
        <position position="238"/>
    </location>
</feature>
<gene>
    <name evidence="11 16" type="primary">Mettl8</name>
    <name evidence="10" type="synonym">Tip</name>
</gene>
<keyword id="KW-0025">Alternative splicing</keyword>
<keyword id="KW-0963">Cytoplasm</keyword>
<keyword id="KW-1017">Isopeptide bond</keyword>
<keyword id="KW-0489">Methyltransferase</keyword>
<keyword id="KW-0496">Mitochondrion</keyword>
<keyword id="KW-0539">Nucleus</keyword>
<keyword id="KW-1185">Reference proteome</keyword>
<keyword id="KW-0949">S-adenosyl-L-methionine</keyword>
<keyword id="KW-0808">Transferase</keyword>
<keyword id="KW-0809">Transit peptide</keyword>
<keyword id="KW-0819">tRNA processing</keyword>
<keyword id="KW-0832">Ubl conjugation</keyword>
<comment type="function">
    <text evidence="2 7">Mitochondrial S-adenosyl-L-methionine-dependent methyltransferase that mediates N(3)-methylcytidine modification of residue 32 of the tRNA anticodon loop of mitochondrial tRNA(Ser)(UCN) and tRNA(Thr) (By similarity). N(3)-methylcytidine methylation modification regulates mitochondrial translation efficiency and is required for activity of the respiratory chain (By similarity). N(3)-methylcytidine methylation of mitochondrial tRNA(Ser)(UCN) requires the formation of N(6)-dimethylallyladenosine(37) (i6A37) by TRIT1 as prerequisite (By similarity). May also mediate N(3)-methylcytidine modification of mRNAs (PubMed:28655767). The existence of N(3)-methylcytidine modification on mRNAs is however unclear, and additional evidences are required to confirm the role of the N(3)-methylcytidine-specific mRNA methyltransferase activity of METTL8 in vivo (By similarity).</text>
</comment>
<comment type="function">
    <molecule>Isoform 5</molecule>
    <text evidence="5">Overexpression in lung progenitor cells stimulates smooth muscle-specific gene expression and suppresses adipogenic gene expression.</text>
</comment>
<comment type="function">
    <molecule>Isoform 4</molecule>
    <text evidence="6">Stimulates adipogenesis.</text>
</comment>
<comment type="function">
    <molecule>Isoform 7</molecule>
    <text evidence="6">Stimulates adipogenesis.</text>
</comment>
<comment type="catalytic activity">
    <reaction evidence="2">
        <text>cytidine(32) in tRNA(Ser) + S-adenosyl-L-methionine = N(3)-methylcytidine(32) in tRNA(Ser) + S-adenosyl-L-homocysteine + H(+)</text>
        <dbReference type="Rhea" id="RHEA:50956"/>
        <dbReference type="Rhea" id="RHEA-COMP:12849"/>
        <dbReference type="Rhea" id="RHEA-COMP:12851"/>
        <dbReference type="ChEBI" id="CHEBI:15378"/>
        <dbReference type="ChEBI" id="CHEBI:57856"/>
        <dbReference type="ChEBI" id="CHEBI:59789"/>
        <dbReference type="ChEBI" id="CHEBI:74894"/>
        <dbReference type="ChEBI" id="CHEBI:82748"/>
    </reaction>
    <physiologicalReaction direction="left-to-right" evidence="2">
        <dbReference type="Rhea" id="RHEA:50957"/>
    </physiologicalReaction>
</comment>
<comment type="catalytic activity">
    <reaction evidence="2">
        <text>cytidine(32) in tRNA(Thr) + S-adenosyl-L-methionine = N(3)-methylcytidine(32) in tRNA(Thr) + S-adenosyl-L-homocysteine + H(+)</text>
        <dbReference type="Rhea" id="RHEA:50960"/>
        <dbReference type="Rhea" id="RHEA-COMP:12850"/>
        <dbReference type="Rhea" id="RHEA-COMP:12852"/>
        <dbReference type="ChEBI" id="CHEBI:15378"/>
        <dbReference type="ChEBI" id="CHEBI:57856"/>
        <dbReference type="ChEBI" id="CHEBI:59789"/>
        <dbReference type="ChEBI" id="CHEBI:74894"/>
        <dbReference type="ChEBI" id="CHEBI:82748"/>
    </reaction>
    <physiologicalReaction direction="left-to-right" evidence="2">
        <dbReference type="Rhea" id="RHEA:50961"/>
    </physiologicalReaction>
</comment>
<comment type="catalytic activity">
    <reaction evidence="15">
        <text>a cytidine in mRNA + S-adenosyl-L-methionine = an N(3)-methylcytidine in mRNA + S-adenosyl-L-homocysteine + H(+)</text>
        <dbReference type="Rhea" id="RHEA:60916"/>
        <dbReference type="Rhea" id="RHEA-COMP:15145"/>
        <dbReference type="Rhea" id="RHEA-COMP:15713"/>
        <dbReference type="ChEBI" id="CHEBI:15378"/>
        <dbReference type="ChEBI" id="CHEBI:57856"/>
        <dbReference type="ChEBI" id="CHEBI:59789"/>
        <dbReference type="ChEBI" id="CHEBI:74894"/>
        <dbReference type="ChEBI" id="CHEBI:82748"/>
    </reaction>
    <physiologicalReaction direction="left-to-right" evidence="15">
        <dbReference type="Rhea" id="RHEA:60917"/>
    </physiologicalReaction>
</comment>
<comment type="subunit">
    <text evidence="6">Interacts with EP300.</text>
</comment>
<comment type="subcellular location">
    <subcellularLocation>
        <location evidence="2">Mitochondrion</location>
    </subcellularLocation>
    <subcellularLocation>
        <location evidence="13">Cytoplasm</location>
    </subcellularLocation>
    <subcellularLocation>
        <location evidence="13">Nucleus</location>
    </subcellularLocation>
    <text evidence="2">Mitochondrial protein (By similarity). The cytoplasmic or nuclear localization observed by some groups is either the result of an incorrect localization caused by N-terminal tagging that interferes with mitochondrial targeting, or splice isoforms that lack the N-terminal mitochondrial transit sequence (By similarity).</text>
</comment>
<comment type="subcellular location">
    <molecule>Isoform 5</molecule>
    <subcellularLocation>
        <location evidence="5">Nucleus</location>
    </subcellularLocation>
    <text evidence="5">Isoform 5 localizes to the nucleus upon cell stretch in embryonic lung progenitor cells.</text>
</comment>
<comment type="alternative products">
    <event type="alternative splicing"/>
    <isoform>
        <id>A2AUU0-1</id>
        <name>1</name>
        <sequence type="displayed"/>
    </isoform>
    <isoform>
        <id>A2AUU0-2</id>
        <name>2</name>
        <name evidence="10">TIP-2</name>
        <sequence type="described" ref="VSP_029516"/>
    </isoform>
    <isoform>
        <id>A2AUU0-3</id>
        <name>3</name>
        <name evidence="10">TIP-4</name>
        <sequence type="described" ref="VSP_029517"/>
    </isoform>
    <isoform>
        <id>A2AUU0-4</id>
        <name>4</name>
        <name evidence="10">TIP-3</name>
        <sequence type="described" ref="VSP_029518"/>
    </isoform>
    <isoform>
        <id>A2AUU0-5</id>
        <name>5</name>
        <name evidence="10">TIP-1</name>
        <sequence type="described" ref="VSP_029515"/>
    </isoform>
    <isoform>
        <id>A2AUU0-6</id>
        <name>6</name>
        <name evidence="10">TIP-5</name>
        <sequence type="described" ref="VSP_037111 VSP_029517"/>
    </isoform>
    <isoform>
        <id>A2AUU0-7</id>
        <name>7</name>
        <name evidence="10">TIP-6</name>
        <sequence type="not described"/>
    </isoform>
    <isoform>
        <id>A2AUU0-8</id>
        <name>8</name>
        <name evidence="10">TIP-7</name>
        <sequence type="not described"/>
    </isoform>
    <isoform>
        <id>A2AUU0-9</id>
        <name>9</name>
        <name evidence="10">TIP-8</name>
        <sequence type="not described"/>
    </isoform>
</comment>
<comment type="tissue specificity">
    <molecule>Isoform 2</molecule>
    <text evidence="5">Absent in embryonic lung but is induced in a fibroblast cell line by stretch.</text>
</comment>
<comment type="tissue specificity">
    <molecule>Isoform 4</molecule>
    <text evidence="5">Expressed in undifferentiated progenitor cells, while its expression is inhibited by stretch.</text>
</comment>
<comment type="tissue specificity">
    <molecule>Isoform 5</molecule>
    <text evidence="5">Absent in undifferentiated embryonic lung mesenchymal cells, but expression is induced by stretch.</text>
</comment>
<comment type="tissue specificity">
    <molecule>Isoform 7</molecule>
    <text evidence="5">Expressed in mature adipose tissue.</text>
</comment>
<comment type="induction">
    <molecule>Isoform 5</molecule>
    <text evidence="5">Induced in stretched embryonic lung mesenchymal cells.</text>
</comment>
<comment type="disruption phenotype">
    <text evidence="7">Mice were born with normal Mendelian ratio without developmental defects (PubMed:28655767). Cells show reduced N(3)-methylcytidine modification in mRNAs (PubMed:28655767).</text>
</comment>
<comment type="similarity">
    <text evidence="12">Belongs to the methyltransferase superfamily. METL family.</text>
</comment>
<comment type="caution">
    <text evidence="13 14">According to some authors, contains a SANT domain but this domain is not detected by any prediction tool.</text>
</comment>
<comment type="sequence caution" evidence="12">
    <conflict type="erroneous initiation">
        <sequence resource="EMBL-CDS" id="AAH04636"/>
    </conflict>
</comment>
<comment type="sequence caution" evidence="12">
    <conflict type="miscellaneous discrepancy">
        <sequence resource="EMBL-CDS" id="AAH57960"/>
    </conflict>
    <text>Sequence differs from the displayed sequence in the N-terminal region.</text>
</comment>
<comment type="sequence caution" evidence="12">
    <conflict type="erroneous initiation">
        <sequence resource="EMBL-CDS" id="AAZ04166"/>
    </conflict>
</comment>
<comment type="sequence caution" evidence="12">
    <conflict type="erroneous initiation">
        <sequence resource="EMBL-CDS" id="AAZ04167"/>
    </conflict>
</comment>
<accession>A2AUU0</accession>
<accession>A2AUU3</accession>
<accession>Q2XV35</accession>
<accession>Q2XV36</accession>
<accession>Q4FCR9</accession>
<accession>Q4FCS0</accession>
<accession>Q6PEN9</accession>
<accession>Q99KI7</accession>
<evidence type="ECO:0000250" key="1">
    <source>
        <dbReference type="UniProtKB" id="Q8TCB7"/>
    </source>
</evidence>
<evidence type="ECO:0000250" key="2">
    <source>
        <dbReference type="UniProtKB" id="Q9H825"/>
    </source>
</evidence>
<evidence type="ECO:0000255" key="3"/>
<evidence type="ECO:0000256" key="4">
    <source>
        <dbReference type="SAM" id="MobiDB-lite"/>
    </source>
</evidence>
<evidence type="ECO:0000269" key="5">
    <source>
    </source>
</evidence>
<evidence type="ECO:0000269" key="6">
    <source>
    </source>
</evidence>
<evidence type="ECO:0000269" key="7">
    <source>
    </source>
</evidence>
<evidence type="ECO:0000303" key="8">
    <source>
    </source>
</evidence>
<evidence type="ECO:0000303" key="9">
    <source>
    </source>
</evidence>
<evidence type="ECO:0000303" key="10">
    <source>
    </source>
</evidence>
<evidence type="ECO:0000303" key="11">
    <source>
    </source>
</evidence>
<evidence type="ECO:0000305" key="12"/>
<evidence type="ECO:0000305" key="13">
    <source>
    </source>
</evidence>
<evidence type="ECO:0000305" key="14">
    <source>
    </source>
</evidence>
<evidence type="ECO:0000305" key="15">
    <source>
    </source>
</evidence>
<evidence type="ECO:0000312" key="16">
    <source>
        <dbReference type="MGI" id="MGI:2385142"/>
    </source>
</evidence>
<dbReference type="EC" id="2.1.1.-" evidence="2 15"/>
<dbReference type="EMBL" id="DQ093357">
    <property type="protein sequence ID" value="AAZ04166.1"/>
    <property type="status" value="ALT_INIT"/>
    <property type="molecule type" value="mRNA"/>
</dbReference>
<dbReference type="EMBL" id="DQ093358">
    <property type="protein sequence ID" value="AAZ04167.1"/>
    <property type="status" value="ALT_INIT"/>
    <property type="molecule type" value="mRNA"/>
</dbReference>
<dbReference type="EMBL" id="DQ230973">
    <property type="protein sequence ID" value="ABB54392.1"/>
    <property type="molecule type" value="mRNA"/>
</dbReference>
<dbReference type="EMBL" id="DQ230974">
    <property type="protein sequence ID" value="ABB54393.1"/>
    <property type="molecule type" value="mRNA"/>
</dbReference>
<dbReference type="EMBL" id="AL929228">
    <property type="status" value="NOT_ANNOTATED_CDS"/>
    <property type="molecule type" value="Genomic_DNA"/>
</dbReference>
<dbReference type="EMBL" id="BC004636">
    <property type="protein sequence ID" value="AAH04636.1"/>
    <property type="status" value="ALT_INIT"/>
    <property type="molecule type" value="mRNA"/>
</dbReference>
<dbReference type="EMBL" id="BC057960">
    <property type="protein sequence ID" value="AAH57960.1"/>
    <property type="status" value="ALT_SEQ"/>
    <property type="molecule type" value="mRNA"/>
</dbReference>
<dbReference type="CCDS" id="CCDS50600.1">
    <molecule id="A2AUU0-3"/>
</dbReference>
<dbReference type="RefSeq" id="NP_001103982.1">
    <molecule id="A2AUU0-6"/>
    <property type="nucleotide sequence ID" value="NM_001110512.3"/>
</dbReference>
<dbReference type="RefSeq" id="NP_663499.2">
    <molecule id="A2AUU0-3"/>
    <property type="nucleotide sequence ID" value="NM_145524.4"/>
</dbReference>
<dbReference type="RefSeq" id="XP_006499258.1">
    <property type="nucleotide sequence ID" value="XM_006499195.3"/>
</dbReference>
<dbReference type="SMR" id="A2AUU0"/>
<dbReference type="BioGRID" id="230705">
    <property type="interactions" value="1"/>
</dbReference>
<dbReference type="FunCoup" id="A2AUU0">
    <property type="interactions" value="1555"/>
</dbReference>
<dbReference type="STRING" id="10090.ENSMUSP00000107804"/>
<dbReference type="PhosphoSitePlus" id="A2AUU0"/>
<dbReference type="jPOST" id="A2AUU0"/>
<dbReference type="PaxDb" id="10090-ENSMUSP00000107804"/>
<dbReference type="ProteomicsDB" id="295546">
    <molecule id="A2AUU0-1"/>
</dbReference>
<dbReference type="ProteomicsDB" id="295547">
    <molecule id="A2AUU0-2"/>
</dbReference>
<dbReference type="ProteomicsDB" id="295548">
    <molecule id="A2AUU0-3"/>
</dbReference>
<dbReference type="ProteomicsDB" id="295549">
    <molecule id="A2AUU0-4"/>
</dbReference>
<dbReference type="ProteomicsDB" id="295550">
    <molecule id="A2AUU0-5"/>
</dbReference>
<dbReference type="ProteomicsDB" id="295551">
    <molecule id="A2AUU0-6"/>
</dbReference>
<dbReference type="Antibodypedia" id="49777">
    <property type="antibodies" value="14 antibodies from 7 providers"/>
</dbReference>
<dbReference type="DNASU" id="228019"/>
<dbReference type="Ensembl" id="ENSMUST00000112179.9">
    <molecule id="A2AUU0-5"/>
    <property type="protein sequence ID" value="ENSMUSP00000107800.3"/>
    <property type="gene ID" value="ENSMUSG00000041975.18"/>
</dbReference>
<dbReference type="Ensembl" id="ENSMUST00000112186.9">
    <molecule id="A2AUU0-3"/>
    <property type="protein sequence ID" value="ENSMUSP00000107804.3"/>
    <property type="gene ID" value="ENSMUSG00000041975.18"/>
</dbReference>
<dbReference type="Ensembl" id="ENSMUST00000121586.8">
    <molecule id="A2AUU0-1"/>
    <property type="protein sequence ID" value="ENSMUSP00000113642.2"/>
    <property type="gene ID" value="ENSMUSG00000041975.18"/>
</dbReference>
<dbReference type="Ensembl" id="ENSMUST00000148876.8">
    <molecule id="A2AUU0-2"/>
    <property type="protein sequence ID" value="ENSMUSP00000115855.2"/>
    <property type="gene ID" value="ENSMUSG00000041975.18"/>
</dbReference>
<dbReference type="GeneID" id="228019"/>
<dbReference type="KEGG" id="mmu:228019"/>
<dbReference type="UCSC" id="uc008jzw.3">
    <molecule id="A2AUU0-6"/>
    <property type="organism name" value="mouse"/>
</dbReference>
<dbReference type="UCSC" id="uc008jzx.3">
    <molecule id="A2AUU0-3"/>
    <property type="organism name" value="mouse"/>
</dbReference>
<dbReference type="AGR" id="MGI:2385142"/>
<dbReference type="CTD" id="79828"/>
<dbReference type="MGI" id="MGI:2385142">
    <property type="gene designation" value="Mettl8"/>
</dbReference>
<dbReference type="VEuPathDB" id="HostDB:ENSMUSG00000041975"/>
<dbReference type="eggNOG" id="KOG2361">
    <property type="taxonomic scope" value="Eukaryota"/>
</dbReference>
<dbReference type="GeneTree" id="ENSGT00940000159683"/>
<dbReference type="HOGENOM" id="CLU_029724_5_0_1"/>
<dbReference type="InParanoid" id="A2AUU0"/>
<dbReference type="OMA" id="PDRMQSV"/>
<dbReference type="OrthoDB" id="28032at9989"/>
<dbReference type="PhylomeDB" id="A2AUU0"/>
<dbReference type="TreeFam" id="TF323232"/>
<dbReference type="BioGRID-ORCS" id="228019">
    <property type="hits" value="1 hit in 77 CRISPR screens"/>
</dbReference>
<dbReference type="ChiTaRS" id="Mettl8">
    <property type="organism name" value="mouse"/>
</dbReference>
<dbReference type="PRO" id="PR:A2AUU0"/>
<dbReference type="Proteomes" id="UP000000589">
    <property type="component" value="Chromosome 2"/>
</dbReference>
<dbReference type="RNAct" id="A2AUU0">
    <property type="molecule type" value="protein"/>
</dbReference>
<dbReference type="Bgee" id="ENSMUSG00000041975">
    <property type="expression patterns" value="Expressed in ileal epithelium and 246 other cell types or tissues"/>
</dbReference>
<dbReference type="ExpressionAtlas" id="A2AUU0">
    <property type="expression patterns" value="baseline and differential"/>
</dbReference>
<dbReference type="GO" id="GO:0005737">
    <property type="term" value="C:cytoplasm"/>
    <property type="evidence" value="ECO:0000314"/>
    <property type="project" value="MGI"/>
</dbReference>
<dbReference type="GO" id="GO:0005739">
    <property type="term" value="C:mitochondrion"/>
    <property type="evidence" value="ECO:0000250"/>
    <property type="project" value="UniProtKB"/>
</dbReference>
<dbReference type="GO" id="GO:0005634">
    <property type="term" value="C:nucleus"/>
    <property type="evidence" value="ECO:0000314"/>
    <property type="project" value="MGI"/>
</dbReference>
<dbReference type="GO" id="GO:0004402">
    <property type="term" value="F:histone acetyltransferase activity"/>
    <property type="evidence" value="ECO:0000314"/>
    <property type="project" value="MGI"/>
</dbReference>
<dbReference type="GO" id="GO:0008174">
    <property type="term" value="F:mRNA methyltransferase activity"/>
    <property type="evidence" value="ECO:0000315"/>
    <property type="project" value="MGI"/>
</dbReference>
<dbReference type="GO" id="GO:0052735">
    <property type="term" value="F:tRNA (cytidine-3-)-methyltransferase activity"/>
    <property type="evidence" value="ECO:0000250"/>
    <property type="project" value="UniProtKB"/>
</dbReference>
<dbReference type="GO" id="GO:0045444">
    <property type="term" value="P:fat cell differentiation"/>
    <property type="evidence" value="ECO:0000314"/>
    <property type="project" value="MGI"/>
</dbReference>
<dbReference type="GO" id="GO:0070131">
    <property type="term" value="P:positive regulation of mitochondrial translation"/>
    <property type="evidence" value="ECO:0000250"/>
    <property type="project" value="UniProtKB"/>
</dbReference>
<dbReference type="GO" id="GO:0007519">
    <property type="term" value="P:skeletal muscle tissue development"/>
    <property type="evidence" value="ECO:0000314"/>
    <property type="project" value="MGI"/>
</dbReference>
<dbReference type="GO" id="GO:0106217">
    <property type="term" value="P:tRNA C3-cytosine methylation"/>
    <property type="evidence" value="ECO:0000250"/>
    <property type="project" value="UniProtKB"/>
</dbReference>
<dbReference type="Gene3D" id="3.40.50.150">
    <property type="entry name" value="Vaccinia Virus protein VP39"/>
    <property type="match status" value="1"/>
</dbReference>
<dbReference type="InterPro" id="IPR013217">
    <property type="entry name" value="Methyltransf_12"/>
</dbReference>
<dbReference type="InterPro" id="IPR026113">
    <property type="entry name" value="METTL2/6/8-like"/>
</dbReference>
<dbReference type="InterPro" id="IPR029063">
    <property type="entry name" value="SAM-dependent_MTases_sf"/>
</dbReference>
<dbReference type="PANTHER" id="PTHR22809">
    <property type="entry name" value="METHYLTRANSFERASE-RELATED"/>
    <property type="match status" value="1"/>
</dbReference>
<dbReference type="PANTHER" id="PTHR22809:SF3">
    <property type="entry name" value="TRNA N(3)-METHYLCYTIDINE METHYLTRANSFERASE"/>
    <property type="match status" value="1"/>
</dbReference>
<dbReference type="Pfam" id="PF08242">
    <property type="entry name" value="Methyltransf_12"/>
    <property type="match status" value="1"/>
</dbReference>
<dbReference type="PIRSF" id="PIRSF037755">
    <property type="entry name" value="Mettl2_prd"/>
    <property type="match status" value="1"/>
</dbReference>
<dbReference type="SUPFAM" id="SSF53335">
    <property type="entry name" value="S-adenosyl-L-methionine-dependent methyltransferases"/>
    <property type="match status" value="1"/>
</dbReference>
<protein>
    <recommendedName>
        <fullName evidence="12">tRNA N(3)-cytidine methyltransferase METTL8, mitochondrial</fullName>
        <ecNumber evidence="2">2.1.1.-</ecNumber>
    </recommendedName>
    <alternativeName>
        <fullName evidence="12">Methyltransferase-like protein 8</fullName>
    </alternativeName>
    <alternativeName>
        <fullName evidence="10">Tension-induced/inhibited protein</fullName>
    </alternativeName>
    <alternativeName>
        <fullName evidence="12">mRNA N(3)-methylcytidine methyltransferase METTL8</fullName>
        <ecNumber evidence="15">2.1.1.-</ecNumber>
    </alternativeName>
</protein>
<organism>
    <name type="scientific">Mus musculus</name>
    <name type="common">Mouse</name>
    <dbReference type="NCBI Taxonomy" id="10090"/>
    <lineage>
        <taxon>Eukaryota</taxon>
        <taxon>Metazoa</taxon>
        <taxon>Chordata</taxon>
        <taxon>Craniata</taxon>
        <taxon>Vertebrata</taxon>
        <taxon>Euteleostomi</taxon>
        <taxon>Mammalia</taxon>
        <taxon>Eutheria</taxon>
        <taxon>Euarchontoglires</taxon>
        <taxon>Glires</taxon>
        <taxon>Rodentia</taxon>
        <taxon>Myomorpha</taxon>
        <taxon>Muroidea</taxon>
        <taxon>Muridae</taxon>
        <taxon>Murinae</taxon>
        <taxon>Mus</taxon>
        <taxon>Mus</taxon>
    </lineage>
</organism>
<reference key="1">
    <citation type="journal article" date="2005" name="Dev. Cell">
        <title>TIPs are tension-responsive proteins involved in myogenic versus adipogenic differentiation.</title>
        <authorList>
            <person name="Jakkaraju S."/>
            <person name="Zhe X."/>
            <person name="Pan D."/>
            <person name="Choudhury R."/>
            <person name="Schuger L."/>
        </authorList>
    </citation>
    <scope>NUCLEOTIDE SEQUENCE [MRNA] (ISOFORMS 2; 4 AND 5)</scope>
    <scope>FUNCTION</scope>
    <scope>SUBCELLULAR LOCATION</scope>
    <scope>TISSUE SPECIFICITY</scope>
    <scope>INDUCTION</scope>
    <source>
        <strain>CD-1</strain>
    </source>
</reference>
<reference key="2">
    <citation type="journal article" date="2008" name="Mol. Cell. Biol.">
        <title>Effects of the SANT domain of tension-induced/inhibited proteins (TIPs), novel partners of the histone acetyltransferase p300, on p300 activity and TIP-6-induced adipogenesis.</title>
        <authorList>
            <person name="Badri K.R."/>
            <person name="Zhou Y."/>
            <person name="Dhru U."/>
            <person name="Aramgam S."/>
            <person name="Schuger L."/>
        </authorList>
    </citation>
    <scope>NUCLEOTIDE SEQUENCE [MRNA] (ISOFORMS 3 AND 6)</scope>
    <scope>FUNCTION</scope>
    <scope>INTERACTION WITH EP300</scope>
    <scope>ALTERNATIVE SPLICING (ISOFORMS 7; 8 AND 9)</scope>
    <source>
        <strain>NIH Swiss</strain>
    </source>
</reference>
<reference key="3">
    <citation type="journal article" date="2009" name="PLoS Biol.">
        <title>Lineage-specific biology revealed by a finished genome assembly of the mouse.</title>
        <authorList>
            <person name="Church D.M."/>
            <person name="Goodstadt L."/>
            <person name="Hillier L.W."/>
            <person name="Zody M.C."/>
            <person name="Goldstein S."/>
            <person name="She X."/>
            <person name="Bult C.J."/>
            <person name="Agarwala R."/>
            <person name="Cherry J.L."/>
            <person name="DiCuccio M."/>
            <person name="Hlavina W."/>
            <person name="Kapustin Y."/>
            <person name="Meric P."/>
            <person name="Maglott D."/>
            <person name="Birtle Z."/>
            <person name="Marques A.C."/>
            <person name="Graves T."/>
            <person name="Zhou S."/>
            <person name="Teague B."/>
            <person name="Potamousis K."/>
            <person name="Churas C."/>
            <person name="Place M."/>
            <person name="Herschleb J."/>
            <person name="Runnheim R."/>
            <person name="Forrest D."/>
            <person name="Amos-Landgraf J."/>
            <person name="Schwartz D.C."/>
            <person name="Cheng Z."/>
            <person name="Lindblad-Toh K."/>
            <person name="Eichler E.E."/>
            <person name="Ponting C.P."/>
        </authorList>
    </citation>
    <scope>NUCLEOTIDE SEQUENCE [LARGE SCALE GENOMIC DNA]</scope>
    <source>
        <strain>C57BL/6J</strain>
    </source>
</reference>
<reference key="4">
    <citation type="journal article" date="2004" name="Genome Res.">
        <title>The status, quality, and expansion of the NIH full-length cDNA project: the Mammalian Gene Collection (MGC).</title>
        <authorList>
            <consortium name="The MGC Project Team"/>
        </authorList>
    </citation>
    <scope>NUCLEOTIDE SEQUENCE [LARGE SCALE MRNA] (ISOFORM 2)</scope>
    <scope>NUCLEOTIDE SEQUENCE [LARGE SCALE MRNA] OF 49-281 (ISOFORM 3)</scope>
    <source>
        <strain>FVB/N</strain>
        <tissue>Mammary tumor</tissue>
    </source>
</reference>
<reference key="5">
    <citation type="journal article" date="2017" name="J. Biol. Chem.">
        <title>Three distinct 3-methylcytidine (m3C) methyltransferases modify tRNA and mRNA in mice and humans.</title>
        <authorList>
            <person name="Xu L."/>
            <person name="Liu X."/>
            <person name="Sheng N."/>
            <person name="Oo K.S."/>
            <person name="Liang J."/>
            <person name="Chionh Y.H."/>
            <person name="Xu J."/>
            <person name="Ye F."/>
            <person name="Gao Y.G."/>
            <person name="Dedon P.C."/>
            <person name="Fu X.Y."/>
        </authorList>
    </citation>
    <scope>FUNCTION</scope>
    <scope>CATALYTIC ACTIVITY</scope>
    <scope>DISRUPTION PHENOTYPE</scope>
</reference>